<organism>
    <name type="scientific">Hypocrea jecorina</name>
    <name type="common">Trichoderma reesei</name>
    <dbReference type="NCBI Taxonomy" id="51453"/>
    <lineage>
        <taxon>Eukaryota</taxon>
        <taxon>Fungi</taxon>
        <taxon>Dikarya</taxon>
        <taxon>Ascomycota</taxon>
        <taxon>Pezizomycotina</taxon>
        <taxon>Sordariomycetes</taxon>
        <taxon>Hypocreomycetidae</taxon>
        <taxon>Hypocreales</taxon>
        <taxon>Hypocreaceae</taxon>
        <taxon>Trichoderma</taxon>
    </lineage>
</organism>
<reference key="1">
    <citation type="journal article" date="1996" name="Eur. J. Biochem.">
        <title>Three alpha-galactosidase genes of Trichoderma reesei cloned by expression in yeast.</title>
        <authorList>
            <person name="Margolles-Clark E."/>
            <person name="Tenkanen M."/>
            <person name="Luonteri E."/>
            <person name="Penttila M."/>
        </authorList>
    </citation>
    <scope>NUCLEOTIDE SEQUENCE [MRNA]</scope>
    <scope>FUNCTION</scope>
    <scope>BIOPHYSICOCHEMICAL PROPERTIES</scope>
    <source>
        <strain>ATCC 56765 / Rut C-30</strain>
    </source>
</reference>
<comment type="function">
    <text evidence="3">Alpha-galactosidase involved in the degradation of simple oligosaccharides like melibiose, raffinose and stachyose, and of polymeric galacto(gluco)mannans.</text>
</comment>
<comment type="catalytic activity">
    <reaction>
        <text>Hydrolysis of terminal, non-reducing alpha-D-galactose residues in alpha-D-galactosides, including galactose oligosaccharides, galactomannans and galactolipids.</text>
        <dbReference type="EC" id="3.2.1.22"/>
    </reaction>
</comment>
<comment type="biophysicochemical properties">
    <phDependence>
        <text evidence="3">Optimum pH is 3.5-4.5.</text>
    </phDependence>
</comment>
<comment type="subcellular location">
    <subcellularLocation>
        <location evidence="4">Secreted</location>
    </subcellularLocation>
</comment>
<comment type="similarity">
    <text evidence="4">Belongs to the glycosyl hydrolase 27 family.</text>
</comment>
<protein>
    <recommendedName>
        <fullName>Alpha-galactosidase 3</fullName>
        <ecNumber>3.2.1.22</ecNumber>
    </recommendedName>
    <alternativeName>
        <fullName>Alpha-D-galactoside galactohydrolase 3</fullName>
    </alternativeName>
    <alternativeName>
        <fullName>Melibiase 3</fullName>
    </alternativeName>
</protein>
<sequence length="624" mass="68455">MSPSAAVLIPLAAAVLLRPVVGQTQCGGNLYTPGTLNFTLECYNAFQDCVAQFEANASQVDCNDGKGNLFMQQQANLGASPGSQNNDAIIAFQDIRDLCLLSGSTTATWGYSDNQWYWAAAEDACYTNDPTRTDVVKTHPAPFCIQNRDSSLPECYPQPDATPPGGPLKVIKTAKTRNGFKSSARGWNTYGVQALVNGSQVVPSFAGQSGLFYTQKFVETQCGVLARPEFKKAGYDLCSLDSGWQATTAVDQHGRIIYNTTRFNLPELASWLHKRDLKLGVYITPGVPCLAHNQTILGTNIKIKDVLNGNNDQINCDFDFRKDGVQQWHDSVVAQWASWGVDMLKLDFLTPGSPSNGANLACDSSDAVRAYQKAIKKSGRKIRLDISWKLCRNETWLPIWSDLAESMRTDQDLDNYGTNTLMAWQVGQRAIENYRQYIGLQAQRNVPLTIYPDMDALFTVNPEHLAGVNDTIRYTVQNHWLGAGANLIIGGDMEQVDALGLKLTTSKQSIDAADFFAKYPMQPRNPGTGSNAAKQLQAWIGGPSDDHEAYVLIVNYGPDLGNGGFSTKLYGKQKVTVSLKDLGISGSAWTFTDIWSGKSSRVTGSYSAWLTEGESQLLRLKRTH</sequence>
<accession>Q92451</accession>
<name>AGAL3_HYPJE</name>
<dbReference type="EC" id="3.2.1.22"/>
<dbReference type="EMBL" id="Z69255">
    <property type="protein sequence ID" value="CAA93246.1"/>
    <property type="molecule type" value="mRNA"/>
</dbReference>
<dbReference type="PIR" id="S74222">
    <property type="entry name" value="S74222"/>
</dbReference>
<dbReference type="SMR" id="Q92451"/>
<dbReference type="CAZy" id="GH27">
    <property type="family name" value="Glycoside Hydrolase Family 27"/>
</dbReference>
<dbReference type="GlyCosmos" id="Q92451">
    <property type="glycosylation" value="7 sites, No reported glycans"/>
</dbReference>
<dbReference type="VEuPathDB" id="FungiDB:TrQ_006770"/>
<dbReference type="OMA" id="QWASWGV"/>
<dbReference type="GO" id="GO:0005576">
    <property type="term" value="C:extracellular region"/>
    <property type="evidence" value="ECO:0007669"/>
    <property type="project" value="UniProtKB-SubCell"/>
</dbReference>
<dbReference type="GO" id="GO:0004557">
    <property type="term" value="F:alpha-galactosidase activity"/>
    <property type="evidence" value="ECO:0000314"/>
    <property type="project" value="UniProtKB"/>
</dbReference>
<dbReference type="GO" id="GO:0005975">
    <property type="term" value="P:carbohydrate metabolic process"/>
    <property type="evidence" value="ECO:0007669"/>
    <property type="project" value="InterPro"/>
</dbReference>
<dbReference type="FunFam" id="3.20.20.70:FF:000252">
    <property type="entry name" value="Glycoside hydrolase family 27"/>
    <property type="match status" value="1"/>
</dbReference>
<dbReference type="Gene3D" id="3.20.20.70">
    <property type="entry name" value="Aldolase class I"/>
    <property type="match status" value="1"/>
</dbReference>
<dbReference type="Gene3D" id="2.60.40.1180">
    <property type="entry name" value="Golgi alpha-mannosidase II"/>
    <property type="match status" value="1"/>
</dbReference>
<dbReference type="InterPro" id="IPR013785">
    <property type="entry name" value="Aldolase_TIM"/>
</dbReference>
<dbReference type="InterPro" id="IPR002241">
    <property type="entry name" value="Glyco_hydro_27"/>
</dbReference>
<dbReference type="InterPro" id="IPR013780">
    <property type="entry name" value="Glyco_hydro_b"/>
</dbReference>
<dbReference type="InterPro" id="IPR017853">
    <property type="entry name" value="Glycoside_hydrolase_SF"/>
</dbReference>
<dbReference type="InterPro" id="IPR041233">
    <property type="entry name" value="Melibiase_C"/>
</dbReference>
<dbReference type="PANTHER" id="PTHR11452:SF33">
    <property type="entry name" value="ALPHA-GALACTOSIDASE 2"/>
    <property type="match status" value="1"/>
</dbReference>
<dbReference type="PANTHER" id="PTHR11452">
    <property type="entry name" value="ALPHA-GALACTOSIDASE/ALPHA-N-ACETYLGALACTOSAMINIDASE"/>
    <property type="match status" value="1"/>
</dbReference>
<dbReference type="Pfam" id="PF16499">
    <property type="entry name" value="Melibiase_2"/>
    <property type="match status" value="1"/>
</dbReference>
<dbReference type="Pfam" id="PF17801">
    <property type="entry name" value="Melibiase_C"/>
    <property type="match status" value="1"/>
</dbReference>
<dbReference type="SUPFAM" id="SSF51445">
    <property type="entry name" value="(Trans)glycosidases"/>
    <property type="match status" value="1"/>
</dbReference>
<dbReference type="SUPFAM" id="SSF51011">
    <property type="entry name" value="Glycosyl hydrolase domain"/>
    <property type="match status" value="1"/>
</dbReference>
<keyword id="KW-0325">Glycoprotein</keyword>
<keyword id="KW-0326">Glycosidase</keyword>
<keyword id="KW-0378">Hydrolase</keyword>
<keyword id="KW-0964">Secreted</keyword>
<keyword id="KW-0732">Signal</keyword>
<evidence type="ECO:0000250" key="1"/>
<evidence type="ECO:0000255" key="2"/>
<evidence type="ECO:0000269" key="3">
    <source>
    </source>
</evidence>
<evidence type="ECO:0000305" key="4"/>
<proteinExistence type="evidence at protein level"/>
<gene>
    <name type="primary">agl3</name>
</gene>
<feature type="signal peptide" evidence="2">
    <location>
        <begin position="1"/>
        <end position="22"/>
    </location>
</feature>
<feature type="chain" id="PRO_5000147669" description="Alpha-galactosidase 3">
    <location>
        <begin position="23"/>
        <end position="624"/>
    </location>
</feature>
<feature type="active site" description="Nucleophile" evidence="1">
    <location>
        <position position="347"/>
    </location>
</feature>
<feature type="active site" description="Proton donor" evidence="1">
    <location>
        <position position="412"/>
    </location>
</feature>
<feature type="glycosylation site" description="N-linked (GlcNAc...) asparagine" evidence="2">
    <location>
        <position position="37"/>
    </location>
</feature>
<feature type="glycosylation site" description="N-linked (GlcNAc...) asparagine" evidence="2">
    <location>
        <position position="56"/>
    </location>
</feature>
<feature type="glycosylation site" description="N-linked (GlcNAc...) asparagine" evidence="2">
    <location>
        <position position="197"/>
    </location>
</feature>
<feature type="glycosylation site" description="N-linked (GlcNAc...) asparagine" evidence="2">
    <location>
        <position position="259"/>
    </location>
</feature>
<feature type="glycosylation site" description="N-linked (GlcNAc...) asparagine" evidence="2">
    <location>
        <position position="293"/>
    </location>
</feature>
<feature type="glycosylation site" description="N-linked (GlcNAc...) asparagine" evidence="2">
    <location>
        <position position="393"/>
    </location>
</feature>
<feature type="glycosylation site" description="N-linked (GlcNAc...) asparagine" evidence="2">
    <location>
        <position position="469"/>
    </location>
</feature>